<dbReference type="EC" id="6.1.1.4" evidence="1"/>
<dbReference type="EMBL" id="CP001096">
    <property type="protein sequence ID" value="ACE98850.1"/>
    <property type="molecule type" value="Genomic_DNA"/>
</dbReference>
<dbReference type="RefSeq" id="WP_012494043.1">
    <property type="nucleotide sequence ID" value="NC_011004.1"/>
</dbReference>
<dbReference type="SMR" id="B3Q8A1"/>
<dbReference type="KEGG" id="rpt:Rpal_0290"/>
<dbReference type="HOGENOM" id="CLU_004427_0_0_5"/>
<dbReference type="OrthoDB" id="9810365at2"/>
<dbReference type="Proteomes" id="UP000001725">
    <property type="component" value="Chromosome"/>
</dbReference>
<dbReference type="GO" id="GO:0005829">
    <property type="term" value="C:cytosol"/>
    <property type="evidence" value="ECO:0007669"/>
    <property type="project" value="TreeGrafter"/>
</dbReference>
<dbReference type="GO" id="GO:0002161">
    <property type="term" value="F:aminoacyl-tRNA deacylase activity"/>
    <property type="evidence" value="ECO:0007669"/>
    <property type="project" value="InterPro"/>
</dbReference>
<dbReference type="GO" id="GO:0005524">
    <property type="term" value="F:ATP binding"/>
    <property type="evidence" value="ECO:0007669"/>
    <property type="project" value="UniProtKB-UniRule"/>
</dbReference>
<dbReference type="GO" id="GO:0004823">
    <property type="term" value="F:leucine-tRNA ligase activity"/>
    <property type="evidence" value="ECO:0007669"/>
    <property type="project" value="UniProtKB-UniRule"/>
</dbReference>
<dbReference type="GO" id="GO:0006429">
    <property type="term" value="P:leucyl-tRNA aminoacylation"/>
    <property type="evidence" value="ECO:0007669"/>
    <property type="project" value="UniProtKB-UniRule"/>
</dbReference>
<dbReference type="CDD" id="cd07958">
    <property type="entry name" value="Anticodon_Ia_Leu_BEm"/>
    <property type="match status" value="1"/>
</dbReference>
<dbReference type="CDD" id="cd00812">
    <property type="entry name" value="LeuRS_core"/>
    <property type="match status" value="1"/>
</dbReference>
<dbReference type="FunFam" id="1.10.730.10:FF:000002">
    <property type="entry name" value="Leucine--tRNA ligase"/>
    <property type="match status" value="1"/>
</dbReference>
<dbReference type="FunFam" id="3.40.50.620:FF:000003">
    <property type="entry name" value="Leucine--tRNA ligase"/>
    <property type="match status" value="1"/>
</dbReference>
<dbReference type="Gene3D" id="2.20.28.290">
    <property type="match status" value="1"/>
</dbReference>
<dbReference type="Gene3D" id="3.10.20.590">
    <property type="match status" value="1"/>
</dbReference>
<dbReference type="Gene3D" id="3.40.50.620">
    <property type="entry name" value="HUPs"/>
    <property type="match status" value="2"/>
</dbReference>
<dbReference type="Gene3D" id="1.10.730.10">
    <property type="entry name" value="Isoleucyl-tRNA Synthetase, Domain 1"/>
    <property type="match status" value="1"/>
</dbReference>
<dbReference type="HAMAP" id="MF_00049_B">
    <property type="entry name" value="Leu_tRNA_synth_B"/>
    <property type="match status" value="1"/>
</dbReference>
<dbReference type="InterPro" id="IPR001412">
    <property type="entry name" value="aa-tRNA-synth_I_CS"/>
</dbReference>
<dbReference type="InterPro" id="IPR002300">
    <property type="entry name" value="aa-tRNA-synth_Ia"/>
</dbReference>
<dbReference type="InterPro" id="IPR002302">
    <property type="entry name" value="Leu-tRNA-ligase"/>
</dbReference>
<dbReference type="InterPro" id="IPR025709">
    <property type="entry name" value="Leu_tRNA-synth_edit"/>
</dbReference>
<dbReference type="InterPro" id="IPR013155">
    <property type="entry name" value="M/V/L/I-tRNA-synth_anticd-bd"/>
</dbReference>
<dbReference type="InterPro" id="IPR015413">
    <property type="entry name" value="Methionyl/Leucyl_tRNA_Synth"/>
</dbReference>
<dbReference type="InterPro" id="IPR014729">
    <property type="entry name" value="Rossmann-like_a/b/a_fold"/>
</dbReference>
<dbReference type="InterPro" id="IPR009080">
    <property type="entry name" value="tRNAsynth_Ia_anticodon-bd"/>
</dbReference>
<dbReference type="InterPro" id="IPR009008">
    <property type="entry name" value="Val/Leu/Ile-tRNA-synth_edit"/>
</dbReference>
<dbReference type="NCBIfam" id="TIGR00396">
    <property type="entry name" value="leuS_bact"/>
    <property type="match status" value="1"/>
</dbReference>
<dbReference type="PANTHER" id="PTHR43740:SF2">
    <property type="entry name" value="LEUCINE--TRNA LIGASE, MITOCHONDRIAL"/>
    <property type="match status" value="1"/>
</dbReference>
<dbReference type="PANTHER" id="PTHR43740">
    <property type="entry name" value="LEUCYL-TRNA SYNTHETASE"/>
    <property type="match status" value="1"/>
</dbReference>
<dbReference type="Pfam" id="PF08264">
    <property type="entry name" value="Anticodon_1"/>
    <property type="match status" value="1"/>
</dbReference>
<dbReference type="Pfam" id="PF00133">
    <property type="entry name" value="tRNA-synt_1"/>
    <property type="match status" value="2"/>
</dbReference>
<dbReference type="Pfam" id="PF13603">
    <property type="entry name" value="tRNA-synt_1_2"/>
    <property type="match status" value="1"/>
</dbReference>
<dbReference type="Pfam" id="PF09334">
    <property type="entry name" value="tRNA-synt_1g"/>
    <property type="match status" value="1"/>
</dbReference>
<dbReference type="PRINTS" id="PR00985">
    <property type="entry name" value="TRNASYNTHLEU"/>
</dbReference>
<dbReference type="SUPFAM" id="SSF47323">
    <property type="entry name" value="Anticodon-binding domain of a subclass of class I aminoacyl-tRNA synthetases"/>
    <property type="match status" value="1"/>
</dbReference>
<dbReference type="SUPFAM" id="SSF52374">
    <property type="entry name" value="Nucleotidylyl transferase"/>
    <property type="match status" value="1"/>
</dbReference>
<dbReference type="SUPFAM" id="SSF50677">
    <property type="entry name" value="ValRS/IleRS/LeuRS editing domain"/>
    <property type="match status" value="1"/>
</dbReference>
<dbReference type="PROSITE" id="PS00178">
    <property type="entry name" value="AA_TRNA_LIGASE_I"/>
    <property type="match status" value="1"/>
</dbReference>
<comment type="catalytic activity">
    <reaction evidence="1">
        <text>tRNA(Leu) + L-leucine + ATP = L-leucyl-tRNA(Leu) + AMP + diphosphate</text>
        <dbReference type="Rhea" id="RHEA:11688"/>
        <dbReference type="Rhea" id="RHEA-COMP:9613"/>
        <dbReference type="Rhea" id="RHEA-COMP:9622"/>
        <dbReference type="ChEBI" id="CHEBI:30616"/>
        <dbReference type="ChEBI" id="CHEBI:33019"/>
        <dbReference type="ChEBI" id="CHEBI:57427"/>
        <dbReference type="ChEBI" id="CHEBI:78442"/>
        <dbReference type="ChEBI" id="CHEBI:78494"/>
        <dbReference type="ChEBI" id="CHEBI:456215"/>
        <dbReference type="EC" id="6.1.1.4"/>
    </reaction>
</comment>
<comment type="subcellular location">
    <subcellularLocation>
        <location evidence="1">Cytoplasm</location>
    </subcellularLocation>
</comment>
<comment type="similarity">
    <text evidence="1">Belongs to the class-I aminoacyl-tRNA synthetase family.</text>
</comment>
<organism>
    <name type="scientific">Rhodopseudomonas palustris (strain TIE-1)</name>
    <dbReference type="NCBI Taxonomy" id="395960"/>
    <lineage>
        <taxon>Bacteria</taxon>
        <taxon>Pseudomonadati</taxon>
        <taxon>Pseudomonadota</taxon>
        <taxon>Alphaproteobacteria</taxon>
        <taxon>Hyphomicrobiales</taxon>
        <taxon>Nitrobacteraceae</taxon>
        <taxon>Rhodopseudomonas</taxon>
    </lineage>
</organism>
<gene>
    <name evidence="1" type="primary">leuS</name>
    <name type="ordered locus">Rpal_0290</name>
</gene>
<accession>B3Q8A1</accession>
<reference key="1">
    <citation type="submission" date="2008-05" db="EMBL/GenBank/DDBJ databases">
        <title>Complete sequence of Rhodopseudomonas palustris TIE-1.</title>
        <authorList>
            <consortium name="US DOE Joint Genome Institute"/>
            <person name="Lucas S."/>
            <person name="Copeland A."/>
            <person name="Lapidus A."/>
            <person name="Glavina del Rio T."/>
            <person name="Dalin E."/>
            <person name="Tice H."/>
            <person name="Pitluck S."/>
            <person name="Chain P."/>
            <person name="Malfatti S."/>
            <person name="Shin M."/>
            <person name="Vergez L."/>
            <person name="Lang D."/>
            <person name="Schmutz J."/>
            <person name="Larimer F."/>
            <person name="Land M."/>
            <person name="Hauser L."/>
            <person name="Kyrpides N."/>
            <person name="Mikhailova N."/>
            <person name="Emerson D."/>
            <person name="Newman D.K."/>
            <person name="Roden E."/>
            <person name="Richardson P."/>
        </authorList>
    </citation>
    <scope>NUCLEOTIDE SEQUENCE [LARGE SCALE GENOMIC DNA]</scope>
    <source>
        <strain>TIE-1</strain>
    </source>
</reference>
<proteinExistence type="inferred from homology"/>
<feature type="chain" id="PRO_1000091353" description="Leucine--tRNA ligase">
    <location>
        <begin position="1"/>
        <end position="876"/>
    </location>
</feature>
<feature type="short sequence motif" description="'HIGH' region">
    <location>
        <begin position="43"/>
        <end position="53"/>
    </location>
</feature>
<feature type="short sequence motif" description="'KMSKS' region">
    <location>
        <begin position="632"/>
        <end position="636"/>
    </location>
</feature>
<feature type="binding site" evidence="1">
    <location>
        <position position="635"/>
    </location>
    <ligand>
        <name>ATP</name>
        <dbReference type="ChEBI" id="CHEBI:30616"/>
    </ligand>
</feature>
<sequence>MSNERYNARESEPKWQAKWDEAKIFATRNDDLRKKYYVLEMFPYPSGRIHMGHVRNYTMGDVVARTMRARGYNVLHPMGWDAFGLPAENAAIERKIAPKAWTYDNIAAMKKQLQTMGLSLDWAREFATCDPSYYKHQQKMFLDFLKVGLVEREKRKLNWDPVDMTVLANEQVIDGRGWRSGAVVELREMNQWVFKITKYAQELLDALDTLDRWPDKVRLMQRNWIGRSEGLMVRFALDSATTPAGETELKIFTTRPDTLFGAKFMAIAADHPLAQAAAAKDPKVAAFIDDCKKRGTAQAEIDTAEKQGIDTGIRAMHPFDPSWKLPVYVANFVLMEYGTGAIFGCPAHDQRDLDFVNKYQLGNTPVVCPEGQDPASFVITDTAYDGDGRMINSRFLDGMTIVEAKEEVAKRLETAQLGGAPVGERKVNFRLRDWGISRQRYWGCPIPIIHCPTCDVVPVPDADLPVVLPEDVSFDKPGNALDHHPTWKHVTCPKCGGKAVRETDTMDTFVDSSWYFARFTDPWNTEAPTTPDVVNRMMPVDQYIGGVEHAILHLLYSRFFTRAMKAAGHIDIQHDEPFAGLFTQGMVVHETYRKADGHFASPAEISITVEGDTRRATLLDGGSPVEIGPIEKMSKSKRNTVDPDDIIGTYGADTARWFMLSDSPPDRDVIWSEEGVKGASRFVQRLWRMVNDAAPIAASAPAERPASFGADALTLRKAAHGALDKVLSGIERLAFNVSLAHIREFSNTLGDALARSQTPSPDLAWAIRESTVILVQLFHPMMPHLAEECWTVLGQTGLVSEALWPQIEPDLLVEDSITLPVQVNGKKRGEVTVPRDAPTSEIEAAVLALDAVKQALGDKPVRKVIVVPQRIVNVVG</sequence>
<name>SYL_RHOPT</name>
<evidence type="ECO:0000255" key="1">
    <source>
        <dbReference type="HAMAP-Rule" id="MF_00049"/>
    </source>
</evidence>
<keyword id="KW-0030">Aminoacyl-tRNA synthetase</keyword>
<keyword id="KW-0067">ATP-binding</keyword>
<keyword id="KW-0963">Cytoplasm</keyword>
<keyword id="KW-0436">Ligase</keyword>
<keyword id="KW-0547">Nucleotide-binding</keyword>
<keyword id="KW-0648">Protein biosynthesis</keyword>
<protein>
    <recommendedName>
        <fullName evidence="1">Leucine--tRNA ligase</fullName>
        <ecNumber evidence="1">6.1.1.4</ecNumber>
    </recommendedName>
    <alternativeName>
        <fullName evidence="1">Leucyl-tRNA synthetase</fullName>
        <shortName evidence="1">LeuRS</shortName>
    </alternativeName>
</protein>